<comment type="function">
    <text evidence="3">Represses expression from the ttgABC operon promoter and its own expression. Binds to a promoter region between the divergently transcribed ttgR and ttgABC genes/operons; in the presence of chloramphenicol or tetracycline this binding no longer occurs and ttgR and ttgABC are derepressed. This suggests that TtgR binds these antibiotics.</text>
</comment>
<comment type="subunit">
    <text evidence="1">Homodimer.</text>
</comment>
<comment type="induction">
    <text evidence="4">Induced 4- to 8-fold in the presence of toluene; this is controlled by TtgX, a possible efflux pump global regulator. Induced by chloramphenicol and probably by tetracycline.</text>
</comment>
<keyword id="KW-0002">3D-structure</keyword>
<keyword id="KW-0238">DNA-binding</keyword>
<keyword id="KW-0678">Repressor</keyword>
<keyword id="KW-0804">Transcription</keyword>
<keyword id="KW-0805">Transcription regulation</keyword>
<sequence length="210" mass="23854">MVRRTKEEAQETRAQIIEAAERAFYKRGVARTTLADIAELAGVTRGAIYWHFNNKAELVQALLDSLHETHDHLARASESEDEVDPLGCMRKLLLQVFNELVLDARTRRINEILHHKCEFTDDMCEIRQQRQSAVLDCHKGITLALANAVRRGQLPGELDAERAAVAMFAYVDGLIRRWLLLPDSVDLLGDVEKWVDTGLDMLRLSPALRK</sequence>
<name>TTGR_PSEPT</name>
<gene>
    <name type="primary">ttgR</name>
    <name type="ordered locus">T1E_0244</name>
</gene>
<accession>Q9AIU0</accession>
<accession>I7B485</accession>
<proteinExistence type="evidence at protein level"/>
<organism>
    <name type="scientific">Pseudomonas putida (strain DOT-T1E)</name>
    <dbReference type="NCBI Taxonomy" id="1196325"/>
    <lineage>
        <taxon>Bacteria</taxon>
        <taxon>Pseudomonadati</taxon>
        <taxon>Pseudomonadota</taxon>
        <taxon>Gammaproteobacteria</taxon>
        <taxon>Pseudomonadales</taxon>
        <taxon>Pseudomonadaceae</taxon>
        <taxon>Pseudomonas</taxon>
    </lineage>
</organism>
<feature type="chain" id="PRO_0000070623" description="HTH-type transcriptional regulator TtgR">
    <location>
        <begin position="1"/>
        <end position="210"/>
    </location>
</feature>
<feature type="domain" description="HTH tetR-type" evidence="2">
    <location>
        <begin position="10"/>
        <end position="70"/>
    </location>
</feature>
<feature type="DNA-binding region" description="H-T-H motif" evidence="2">
    <location>
        <begin position="33"/>
        <end position="52"/>
    </location>
</feature>
<feature type="helix" evidence="7">
    <location>
        <begin position="5"/>
        <end position="27"/>
    </location>
</feature>
<feature type="turn" evidence="5">
    <location>
        <begin position="28"/>
        <end position="31"/>
    </location>
</feature>
<feature type="helix" evidence="7">
    <location>
        <begin position="34"/>
        <end position="41"/>
    </location>
</feature>
<feature type="helix" evidence="7">
    <location>
        <begin position="47"/>
        <end position="51"/>
    </location>
</feature>
<feature type="helix" evidence="7">
    <location>
        <begin position="55"/>
        <end position="65"/>
    </location>
</feature>
<feature type="helix" evidence="7">
    <location>
        <begin position="68"/>
        <end position="70"/>
    </location>
</feature>
<feature type="helix" evidence="7">
    <location>
        <begin position="71"/>
        <end position="78"/>
    </location>
</feature>
<feature type="helix" evidence="7">
    <location>
        <begin position="85"/>
        <end position="102"/>
    </location>
</feature>
<feature type="helix" evidence="7">
    <location>
        <begin position="104"/>
        <end position="115"/>
    </location>
</feature>
<feature type="helix" evidence="6">
    <location>
        <begin position="121"/>
        <end position="123"/>
    </location>
</feature>
<feature type="helix" evidence="7">
    <location>
        <begin position="125"/>
        <end position="150"/>
    </location>
</feature>
<feature type="helix" evidence="7">
    <location>
        <begin position="160"/>
        <end position="180"/>
    </location>
</feature>
<feature type="helix" evidence="7">
    <location>
        <begin position="182"/>
        <end position="184"/>
    </location>
</feature>
<feature type="turn" evidence="7">
    <location>
        <begin position="187"/>
        <end position="190"/>
    </location>
</feature>
<feature type="helix" evidence="7">
    <location>
        <begin position="191"/>
        <end position="204"/>
    </location>
</feature>
<feature type="helix" evidence="7">
    <location>
        <begin position="206"/>
        <end position="208"/>
    </location>
</feature>
<protein>
    <recommendedName>
        <fullName>HTH-type transcriptional regulator TtgR</fullName>
    </recommendedName>
    <alternativeName>
        <fullName>Toluene efflux pump ttgABC operon repressor</fullName>
    </alternativeName>
</protein>
<evidence type="ECO:0000250" key="1"/>
<evidence type="ECO:0000255" key="2">
    <source>
        <dbReference type="PROSITE-ProRule" id="PRU00335"/>
    </source>
</evidence>
<evidence type="ECO:0000269" key="3">
    <source>
    </source>
</evidence>
<evidence type="ECO:0000269" key="4">
    <source>
    </source>
</evidence>
<evidence type="ECO:0007829" key="5">
    <source>
        <dbReference type="PDB" id="2UXU"/>
    </source>
</evidence>
<evidence type="ECO:0007829" key="6">
    <source>
        <dbReference type="PDB" id="7K1A"/>
    </source>
</evidence>
<evidence type="ECO:0007829" key="7">
    <source>
        <dbReference type="PDB" id="7KD8"/>
    </source>
</evidence>
<dbReference type="EMBL" id="AF238479">
    <property type="protein sequence ID" value="AAK15050.1"/>
    <property type="molecule type" value="Genomic_DNA"/>
</dbReference>
<dbReference type="EMBL" id="CP003734">
    <property type="protein sequence ID" value="AFO46103.1"/>
    <property type="molecule type" value="Genomic_DNA"/>
</dbReference>
<dbReference type="RefSeq" id="WP_014859138.1">
    <property type="nucleotide sequence ID" value="NC_018220.1"/>
</dbReference>
<dbReference type="PDB" id="2UXH">
    <property type="method" value="X-ray"/>
    <property type="resolution" value="2.40 A"/>
    <property type="chains" value="A/B=1-210"/>
</dbReference>
<dbReference type="PDB" id="2UXI">
    <property type="method" value="X-ray"/>
    <property type="resolution" value="2.50 A"/>
    <property type="chains" value="A/B=1-210"/>
</dbReference>
<dbReference type="PDB" id="2UXO">
    <property type="method" value="X-ray"/>
    <property type="resolution" value="2.70 A"/>
    <property type="chains" value="A/B=1-210"/>
</dbReference>
<dbReference type="PDB" id="2UXP">
    <property type="method" value="X-ray"/>
    <property type="resolution" value="2.70 A"/>
    <property type="chains" value="A/B=1-210"/>
</dbReference>
<dbReference type="PDB" id="2UXU">
    <property type="method" value="X-ray"/>
    <property type="resolution" value="2.30 A"/>
    <property type="chains" value="A/B=1-210"/>
</dbReference>
<dbReference type="PDB" id="2XDN">
    <property type="method" value="X-ray"/>
    <property type="resolution" value="2.20 A"/>
    <property type="chains" value="A/B/C/D=1-210"/>
</dbReference>
<dbReference type="PDB" id="7K1A">
    <property type="method" value="X-ray"/>
    <property type="resolution" value="1.75 A"/>
    <property type="chains" value="A/B=1-210"/>
</dbReference>
<dbReference type="PDB" id="7K1C">
    <property type="method" value="X-ray"/>
    <property type="resolution" value="1.90 A"/>
    <property type="chains" value="A/B=1-210"/>
</dbReference>
<dbReference type="PDB" id="7KD8">
    <property type="method" value="X-ray"/>
    <property type="resolution" value="1.71 A"/>
    <property type="chains" value="A/B/C/D=1-210"/>
</dbReference>
<dbReference type="PDB" id="8V90">
    <property type="method" value="X-ray"/>
    <property type="resolution" value="2.08 A"/>
    <property type="chains" value="A/B/C/D=1-210"/>
</dbReference>
<dbReference type="PDBsum" id="2UXH"/>
<dbReference type="PDBsum" id="2UXI"/>
<dbReference type="PDBsum" id="2UXO"/>
<dbReference type="PDBsum" id="2UXP"/>
<dbReference type="PDBsum" id="2UXU"/>
<dbReference type="PDBsum" id="2XDN"/>
<dbReference type="PDBsum" id="7K1A"/>
<dbReference type="PDBsum" id="7K1C"/>
<dbReference type="PDBsum" id="7KD8"/>
<dbReference type="PDBsum" id="8V90"/>
<dbReference type="SMR" id="Q9AIU0"/>
<dbReference type="DrugBank" id="DB03467">
    <property type="generic name" value="Naringenin"/>
</dbReference>
<dbReference type="DrugBank" id="DB07810">
    <property type="generic name" value="Phloretin"/>
</dbReference>
<dbReference type="DrugBank" id="DB04216">
    <property type="generic name" value="Quercetin"/>
</dbReference>
<dbReference type="KEGG" id="ppx:T1E_0244"/>
<dbReference type="PATRIC" id="fig|1196325.3.peg.245"/>
<dbReference type="HOGENOM" id="CLU_069356_12_3_6"/>
<dbReference type="EvolutionaryTrace" id="Q9AIU0"/>
<dbReference type="PRO" id="PR:Q9AIU0"/>
<dbReference type="Proteomes" id="UP000006503">
    <property type="component" value="Chromosome"/>
</dbReference>
<dbReference type="GO" id="GO:0032993">
    <property type="term" value="C:protein-DNA complex"/>
    <property type="evidence" value="ECO:0000315"/>
    <property type="project" value="CollecTF"/>
</dbReference>
<dbReference type="GO" id="GO:0001217">
    <property type="term" value="F:DNA-binding transcription repressor activity"/>
    <property type="evidence" value="ECO:0000315"/>
    <property type="project" value="CollecTF"/>
</dbReference>
<dbReference type="GO" id="GO:0000976">
    <property type="term" value="F:transcription cis-regulatory region binding"/>
    <property type="evidence" value="ECO:0000315"/>
    <property type="project" value="CollecTF"/>
</dbReference>
<dbReference type="FunFam" id="1.10.357.10:FF:000003">
    <property type="entry name" value="HTH-type transcriptional regulator AcrR"/>
    <property type="match status" value="1"/>
</dbReference>
<dbReference type="Gene3D" id="1.10.357.10">
    <property type="entry name" value="Tetracycline Repressor, domain 2"/>
    <property type="match status" value="1"/>
</dbReference>
<dbReference type="InterPro" id="IPR023772">
    <property type="entry name" value="DNA-bd_HTH_TetR-type_CS"/>
</dbReference>
<dbReference type="InterPro" id="IPR009057">
    <property type="entry name" value="Homeodomain-like_sf"/>
</dbReference>
<dbReference type="InterPro" id="IPR050109">
    <property type="entry name" value="HTH-type_TetR-like_transc_reg"/>
</dbReference>
<dbReference type="InterPro" id="IPR001647">
    <property type="entry name" value="HTH_TetR"/>
</dbReference>
<dbReference type="InterPro" id="IPR036271">
    <property type="entry name" value="Tet_transcr_reg_TetR-rel_C_sf"/>
</dbReference>
<dbReference type="InterPro" id="IPR013572">
    <property type="entry name" value="Tscrpt_reg_MAATS_C"/>
</dbReference>
<dbReference type="PANTHER" id="PTHR30055:SF240">
    <property type="entry name" value="HTH-TYPE TRANSCRIPTIONAL REGULATOR ACRR"/>
    <property type="match status" value="1"/>
</dbReference>
<dbReference type="PANTHER" id="PTHR30055">
    <property type="entry name" value="HTH-TYPE TRANSCRIPTIONAL REGULATOR RUTR"/>
    <property type="match status" value="1"/>
</dbReference>
<dbReference type="Pfam" id="PF08361">
    <property type="entry name" value="TetR_C_2"/>
    <property type="match status" value="1"/>
</dbReference>
<dbReference type="Pfam" id="PF00440">
    <property type="entry name" value="TetR_N"/>
    <property type="match status" value="1"/>
</dbReference>
<dbReference type="PRINTS" id="PR00455">
    <property type="entry name" value="HTHTETR"/>
</dbReference>
<dbReference type="SUPFAM" id="SSF46689">
    <property type="entry name" value="Homeodomain-like"/>
    <property type="match status" value="1"/>
</dbReference>
<dbReference type="SUPFAM" id="SSF48498">
    <property type="entry name" value="Tetracyclin repressor-like, C-terminal domain"/>
    <property type="match status" value="1"/>
</dbReference>
<dbReference type="PROSITE" id="PS01081">
    <property type="entry name" value="HTH_TETR_1"/>
    <property type="match status" value="1"/>
</dbReference>
<dbReference type="PROSITE" id="PS50977">
    <property type="entry name" value="HTH_TETR_2"/>
    <property type="match status" value="1"/>
</dbReference>
<reference key="1">
    <citation type="journal article" date="2001" name="Mol. Microbiol.">
        <title>Global and cognate regulators control the expression of the organic solvent efflux pumps TtgABC and TtgDEF of Pseudomonas putida.</title>
        <authorList>
            <person name="Duque E."/>
            <person name="Segura A."/>
            <person name="Mosqueda G."/>
            <person name="Ramos J.L."/>
        </authorList>
    </citation>
    <scope>NUCLEOTIDE SEQUENCE [GENOMIC DNA]</scope>
    <scope>FUNCTION</scope>
    <source>
        <strain>DOT-T1E</strain>
    </source>
</reference>
<reference key="2">
    <citation type="journal article" date="2013" name="Microb. Biotechnol.">
        <title>Metabolic potential of the organic-solvent tolerant Pseudomonas putida DOT-T1E deduced from its annotated genome.</title>
        <authorList>
            <person name="Udaondo Z."/>
            <person name="Molina L."/>
            <person name="Daniels C."/>
            <person name="Gomez M.J."/>
            <person name="Molina-Henares M.A."/>
            <person name="Matilla M.A."/>
            <person name="Roca A."/>
            <person name="Fernandez M."/>
            <person name="Duque E."/>
            <person name="Segura A."/>
            <person name="Ramos J.L."/>
        </authorList>
    </citation>
    <scope>NUCLEOTIDE SEQUENCE [LARGE SCALE GENOMIC DNA]</scope>
    <source>
        <strain>DOT-T1E</strain>
    </source>
</reference>
<reference key="3">
    <citation type="journal article" date="2003" name="Antimicrob. Agents Chemother.">
        <title>Antibiotic-dependent induction of Pseudomonas putida DOT-T1E TtgABC efflux pump is mediated by the drug binding repressor TtgR.</title>
        <authorList>
            <person name="Teran W."/>
            <person name="Felipe A."/>
            <person name="Segura A."/>
            <person name="Rojas A."/>
            <person name="Ramos J.L."/>
            <person name="Gallegos M.T."/>
        </authorList>
    </citation>
    <scope>DNA-BINDING</scope>
    <scope>INDUCTION BY ANTIBIOTICS</scope>
    <source>
        <strain>DOT-T1E</strain>
    </source>
</reference>